<name>TRMN6_ECO57</name>
<comment type="function">
    <text evidence="1">Specifically methylates the adenine in position 37 of tRNA(1)(Val) (anticodon cmo5UAC).</text>
</comment>
<comment type="catalytic activity">
    <reaction evidence="1">
        <text>adenosine(37) in tRNA1(Val) + S-adenosyl-L-methionine = N(6)-methyladenosine(37) in tRNA1(Val) + S-adenosyl-L-homocysteine + H(+)</text>
        <dbReference type="Rhea" id="RHEA:43160"/>
        <dbReference type="Rhea" id="RHEA-COMP:10369"/>
        <dbReference type="Rhea" id="RHEA-COMP:10370"/>
        <dbReference type="ChEBI" id="CHEBI:15378"/>
        <dbReference type="ChEBI" id="CHEBI:57856"/>
        <dbReference type="ChEBI" id="CHEBI:59789"/>
        <dbReference type="ChEBI" id="CHEBI:74411"/>
        <dbReference type="ChEBI" id="CHEBI:74449"/>
        <dbReference type="EC" id="2.1.1.223"/>
    </reaction>
</comment>
<comment type="subcellular location">
    <subcellularLocation>
        <location evidence="1">Cytoplasm</location>
    </subcellularLocation>
</comment>
<comment type="similarity">
    <text evidence="1">Belongs to the methyltransferase superfamily. tRNA (adenine-N(6)-)-methyltransferase family.</text>
</comment>
<comment type="sequence caution" evidence="2">
    <conflict type="erroneous initiation">
        <sequence resource="EMBL-CDS" id="AAG57691"/>
    </conflict>
</comment>
<comment type="sequence caution" evidence="2">
    <conflict type="erroneous initiation">
        <sequence resource="EMBL-CDS" id="BAB36864"/>
    </conflict>
</comment>
<protein>
    <recommendedName>
        <fullName evidence="1">tRNA1(Val) (adenine(37)-N6)-methyltransferase</fullName>
        <ecNumber evidence="1">2.1.1.223</ecNumber>
    </recommendedName>
    <alternativeName>
        <fullName evidence="1">tRNA m6A37 methyltransferase</fullName>
    </alternativeName>
</protein>
<keyword id="KW-0963">Cytoplasm</keyword>
<keyword id="KW-0489">Methyltransferase</keyword>
<keyword id="KW-1185">Reference proteome</keyword>
<keyword id="KW-0949">S-adenosyl-L-methionine</keyword>
<keyword id="KW-0808">Transferase</keyword>
<keyword id="KW-0819">tRNA processing</keyword>
<gene>
    <name evidence="1" type="primary">yfiC</name>
    <name type="ordered locus">Z3857</name>
    <name type="ordered locus">ECs3441</name>
</gene>
<feature type="chain" id="PRO_0000387366" description="tRNA1(Val) (adenine(37)-N6)-methyltransferase">
    <location>
        <begin position="1"/>
        <end position="245"/>
    </location>
</feature>
<proteinExistence type="inferred from homology"/>
<reference key="1">
    <citation type="journal article" date="2001" name="Nature">
        <title>Genome sequence of enterohaemorrhagic Escherichia coli O157:H7.</title>
        <authorList>
            <person name="Perna N.T."/>
            <person name="Plunkett G. III"/>
            <person name="Burland V."/>
            <person name="Mau B."/>
            <person name="Glasner J.D."/>
            <person name="Rose D.J."/>
            <person name="Mayhew G.F."/>
            <person name="Evans P.S."/>
            <person name="Gregor J."/>
            <person name="Kirkpatrick H.A."/>
            <person name="Posfai G."/>
            <person name="Hackett J."/>
            <person name="Klink S."/>
            <person name="Boutin A."/>
            <person name="Shao Y."/>
            <person name="Miller L."/>
            <person name="Grotbeck E.J."/>
            <person name="Davis N.W."/>
            <person name="Lim A."/>
            <person name="Dimalanta E.T."/>
            <person name="Potamousis K."/>
            <person name="Apodaca J."/>
            <person name="Anantharaman T.S."/>
            <person name="Lin J."/>
            <person name="Yen G."/>
            <person name="Schwartz D.C."/>
            <person name="Welch R.A."/>
            <person name="Blattner F.R."/>
        </authorList>
    </citation>
    <scope>NUCLEOTIDE SEQUENCE [LARGE SCALE GENOMIC DNA]</scope>
    <source>
        <strain>O157:H7 / EDL933 / ATCC 700927 / EHEC</strain>
    </source>
</reference>
<reference key="2">
    <citation type="journal article" date="2001" name="DNA Res.">
        <title>Complete genome sequence of enterohemorrhagic Escherichia coli O157:H7 and genomic comparison with a laboratory strain K-12.</title>
        <authorList>
            <person name="Hayashi T."/>
            <person name="Makino K."/>
            <person name="Ohnishi M."/>
            <person name="Kurokawa K."/>
            <person name="Ishii K."/>
            <person name="Yokoyama K."/>
            <person name="Han C.-G."/>
            <person name="Ohtsubo E."/>
            <person name="Nakayama K."/>
            <person name="Murata T."/>
            <person name="Tanaka M."/>
            <person name="Tobe T."/>
            <person name="Iida T."/>
            <person name="Takami H."/>
            <person name="Honda T."/>
            <person name="Sasakawa C."/>
            <person name="Ogasawara N."/>
            <person name="Yasunaga T."/>
            <person name="Kuhara S."/>
            <person name="Shiba T."/>
            <person name="Hattori M."/>
            <person name="Shinagawa H."/>
        </authorList>
    </citation>
    <scope>NUCLEOTIDE SEQUENCE [LARGE SCALE GENOMIC DNA]</scope>
    <source>
        <strain>O157:H7 / Sakai / RIMD 0509952 / EHEC</strain>
    </source>
</reference>
<accession>Q8XA22</accession>
<accession>Q7ABJ6</accession>
<organism>
    <name type="scientific">Escherichia coli O157:H7</name>
    <dbReference type="NCBI Taxonomy" id="83334"/>
    <lineage>
        <taxon>Bacteria</taxon>
        <taxon>Pseudomonadati</taxon>
        <taxon>Pseudomonadota</taxon>
        <taxon>Gammaproteobacteria</taxon>
        <taxon>Enterobacterales</taxon>
        <taxon>Enterobacteriaceae</taxon>
        <taxon>Escherichia</taxon>
    </lineage>
</organism>
<evidence type="ECO:0000255" key="1">
    <source>
        <dbReference type="HAMAP-Rule" id="MF_01872"/>
    </source>
</evidence>
<evidence type="ECO:0000305" key="2"/>
<dbReference type="EC" id="2.1.1.223" evidence="1"/>
<dbReference type="EMBL" id="AE005174">
    <property type="protein sequence ID" value="AAG57691.1"/>
    <property type="status" value="ALT_INIT"/>
    <property type="molecule type" value="Genomic_DNA"/>
</dbReference>
<dbReference type="EMBL" id="BA000007">
    <property type="protein sequence ID" value="BAB36864.1"/>
    <property type="status" value="ALT_INIT"/>
    <property type="molecule type" value="Genomic_DNA"/>
</dbReference>
<dbReference type="PIR" id="A91059">
    <property type="entry name" value="A91059"/>
</dbReference>
<dbReference type="PIR" id="G85903">
    <property type="entry name" value="G85903"/>
</dbReference>
<dbReference type="SMR" id="Q8XA22"/>
<dbReference type="STRING" id="155864.Z3857"/>
<dbReference type="KEGG" id="ece:Z3857"/>
<dbReference type="KEGG" id="ecs:ECs_3441"/>
<dbReference type="PATRIC" id="fig|386585.9.peg.3596"/>
<dbReference type="eggNOG" id="COG4123">
    <property type="taxonomic scope" value="Bacteria"/>
</dbReference>
<dbReference type="HOGENOM" id="CLU_061983_0_0_6"/>
<dbReference type="OMA" id="NQYTEAF"/>
<dbReference type="Proteomes" id="UP000000558">
    <property type="component" value="Chromosome"/>
</dbReference>
<dbReference type="Proteomes" id="UP000002519">
    <property type="component" value="Chromosome"/>
</dbReference>
<dbReference type="GO" id="GO:0005737">
    <property type="term" value="C:cytoplasm"/>
    <property type="evidence" value="ECO:0007669"/>
    <property type="project" value="UniProtKB-SubCell"/>
</dbReference>
<dbReference type="GO" id="GO:0003676">
    <property type="term" value="F:nucleic acid binding"/>
    <property type="evidence" value="ECO:0007669"/>
    <property type="project" value="InterPro"/>
</dbReference>
<dbReference type="GO" id="GO:0016430">
    <property type="term" value="F:tRNA (adenine-N6)-methyltransferase activity"/>
    <property type="evidence" value="ECO:0007669"/>
    <property type="project" value="UniProtKB-UniRule"/>
</dbReference>
<dbReference type="GO" id="GO:0032259">
    <property type="term" value="P:methylation"/>
    <property type="evidence" value="ECO:0007669"/>
    <property type="project" value="UniProtKB-KW"/>
</dbReference>
<dbReference type="GO" id="GO:0008033">
    <property type="term" value="P:tRNA processing"/>
    <property type="evidence" value="ECO:0007669"/>
    <property type="project" value="UniProtKB-UniRule"/>
</dbReference>
<dbReference type="CDD" id="cd02440">
    <property type="entry name" value="AdoMet_MTases"/>
    <property type="match status" value="1"/>
</dbReference>
<dbReference type="FunFam" id="3.40.50.150:FF:000087">
    <property type="entry name" value="tRNA1(Val) (adenine(37)-N6)-methyltransferase"/>
    <property type="match status" value="1"/>
</dbReference>
<dbReference type="Gene3D" id="3.40.50.150">
    <property type="entry name" value="Vaccinia Virus protein VP39"/>
    <property type="match status" value="1"/>
</dbReference>
<dbReference type="HAMAP" id="MF_01872">
    <property type="entry name" value="tRNA_methyltr_YfiC"/>
    <property type="match status" value="1"/>
</dbReference>
<dbReference type="InterPro" id="IPR002052">
    <property type="entry name" value="DNA_methylase_N6_adenine_CS"/>
</dbReference>
<dbReference type="InterPro" id="IPR029063">
    <property type="entry name" value="SAM-dependent_MTases_sf"/>
</dbReference>
<dbReference type="InterPro" id="IPR007848">
    <property type="entry name" value="Small_mtfrase_dom"/>
</dbReference>
<dbReference type="InterPro" id="IPR050210">
    <property type="entry name" value="tRNA_Adenine-N(6)_MTase"/>
</dbReference>
<dbReference type="InterPro" id="IPR022882">
    <property type="entry name" value="tRNA_adenine-N6_MeTrfase"/>
</dbReference>
<dbReference type="NCBIfam" id="NF047853">
    <property type="entry name" value="tRm6a37MtseTrmN"/>
    <property type="match status" value="1"/>
</dbReference>
<dbReference type="PANTHER" id="PTHR47739">
    <property type="entry name" value="TRNA1(VAL) (ADENINE(37)-N6)-METHYLTRANSFERASE"/>
    <property type="match status" value="1"/>
</dbReference>
<dbReference type="PANTHER" id="PTHR47739:SF1">
    <property type="entry name" value="TRNA1(VAL) (ADENINE(37)-N6)-METHYLTRANSFERASE"/>
    <property type="match status" value="1"/>
</dbReference>
<dbReference type="Pfam" id="PF05175">
    <property type="entry name" value="MTS"/>
    <property type="match status" value="1"/>
</dbReference>
<dbReference type="SUPFAM" id="SSF53335">
    <property type="entry name" value="S-adenosyl-L-methionine-dependent methyltransferases"/>
    <property type="match status" value="1"/>
</dbReference>
<dbReference type="PROSITE" id="PS00092">
    <property type="entry name" value="N6_MTASE"/>
    <property type="match status" value="1"/>
</dbReference>
<sequence length="245" mass="27243">MSQSTSVLRRNGFTFKQFFVAHDRCAMKVGTDGILLGAWAPVAGVKRCLDIGAGSGLLALMLAQRTSDSVIIDAVELESEAATQAQENVAQSPWLERINVHTADIQQWVTQQTARFDLIISNPPYYEQGVECATPQREQARYTTSLDHQTLLTCAAECITEEGFFCVVLPEQIGNSFTELALSMGWHLRLRTDVAENEARLPHRVLLAFSPQAGECFSDRLVIRGPDQNYSEAYTALTQAFYLFM</sequence>